<reference key="1">
    <citation type="submission" date="2004-11" db="EMBL/GenBank/DDBJ databases">
        <title>Complete genome sequence of Thermus thermophilus HB8.</title>
        <authorList>
            <person name="Masui R."/>
            <person name="Kurokawa K."/>
            <person name="Nakagawa N."/>
            <person name="Tokunaga F."/>
            <person name="Koyama Y."/>
            <person name="Shibata T."/>
            <person name="Oshima T."/>
            <person name="Yokoyama S."/>
            <person name="Yasunaga T."/>
            <person name="Kuramitsu S."/>
        </authorList>
    </citation>
    <scope>NUCLEOTIDE SEQUENCE [LARGE SCALE GENOMIC DNA]</scope>
    <source>
        <strain>ATCC 27634 / DSM 579 / HB8</strain>
    </source>
</reference>
<gene>
    <name evidence="1" type="primary">rlmH</name>
    <name type="ordered locus">TTHA0228</name>
</gene>
<accession>Q5SLR5</accession>
<dbReference type="EC" id="2.1.1.177" evidence="1"/>
<dbReference type="EMBL" id="AP008226">
    <property type="protein sequence ID" value="BAD70051.1"/>
    <property type="molecule type" value="Genomic_DNA"/>
</dbReference>
<dbReference type="RefSeq" id="WP_011227792.1">
    <property type="nucleotide sequence ID" value="NC_006461.1"/>
</dbReference>
<dbReference type="RefSeq" id="YP_143494.1">
    <property type="nucleotide sequence ID" value="NC_006461.1"/>
</dbReference>
<dbReference type="SMR" id="Q5SLR5"/>
<dbReference type="EnsemblBacteria" id="BAD70051">
    <property type="protein sequence ID" value="BAD70051"/>
    <property type="gene ID" value="BAD70051"/>
</dbReference>
<dbReference type="GeneID" id="3167952"/>
<dbReference type="KEGG" id="ttj:TTHA0228"/>
<dbReference type="PATRIC" id="fig|300852.9.peg.226"/>
<dbReference type="eggNOG" id="COG1576">
    <property type="taxonomic scope" value="Bacteria"/>
</dbReference>
<dbReference type="HOGENOM" id="CLU_100552_2_0_0"/>
<dbReference type="PhylomeDB" id="Q5SLR5"/>
<dbReference type="Proteomes" id="UP000000532">
    <property type="component" value="Chromosome"/>
</dbReference>
<dbReference type="GO" id="GO:0005737">
    <property type="term" value="C:cytoplasm"/>
    <property type="evidence" value="ECO:0007669"/>
    <property type="project" value="UniProtKB-SubCell"/>
</dbReference>
<dbReference type="GO" id="GO:0070038">
    <property type="term" value="F:rRNA (pseudouridine-N3-)-methyltransferase activity"/>
    <property type="evidence" value="ECO:0007669"/>
    <property type="project" value="UniProtKB-UniRule"/>
</dbReference>
<dbReference type="CDD" id="cd18081">
    <property type="entry name" value="RlmH-like"/>
    <property type="match status" value="1"/>
</dbReference>
<dbReference type="Gene3D" id="3.40.1280.10">
    <property type="match status" value="1"/>
</dbReference>
<dbReference type="HAMAP" id="MF_00658">
    <property type="entry name" value="23SrRNA_methyltr_H"/>
    <property type="match status" value="1"/>
</dbReference>
<dbReference type="InterPro" id="IPR029028">
    <property type="entry name" value="Alpha/beta_knot_MTases"/>
</dbReference>
<dbReference type="InterPro" id="IPR003742">
    <property type="entry name" value="RlmH-like"/>
</dbReference>
<dbReference type="InterPro" id="IPR029026">
    <property type="entry name" value="tRNA_m1G_MTases_N"/>
</dbReference>
<dbReference type="PANTHER" id="PTHR33603">
    <property type="entry name" value="METHYLTRANSFERASE"/>
    <property type="match status" value="1"/>
</dbReference>
<dbReference type="PANTHER" id="PTHR33603:SF1">
    <property type="entry name" value="RIBOSOMAL RNA LARGE SUBUNIT METHYLTRANSFERASE H"/>
    <property type="match status" value="1"/>
</dbReference>
<dbReference type="Pfam" id="PF02590">
    <property type="entry name" value="SPOUT_MTase"/>
    <property type="match status" value="1"/>
</dbReference>
<dbReference type="PIRSF" id="PIRSF004505">
    <property type="entry name" value="MT_bac"/>
    <property type="match status" value="1"/>
</dbReference>
<dbReference type="SUPFAM" id="SSF75217">
    <property type="entry name" value="alpha/beta knot"/>
    <property type="match status" value="1"/>
</dbReference>
<organism>
    <name type="scientific">Thermus thermophilus (strain ATCC 27634 / DSM 579 / HB8)</name>
    <dbReference type="NCBI Taxonomy" id="300852"/>
    <lineage>
        <taxon>Bacteria</taxon>
        <taxon>Thermotogati</taxon>
        <taxon>Deinococcota</taxon>
        <taxon>Deinococci</taxon>
        <taxon>Thermales</taxon>
        <taxon>Thermaceae</taxon>
        <taxon>Thermus</taxon>
    </lineage>
</organism>
<name>RLMH_THET8</name>
<keyword id="KW-0963">Cytoplasm</keyword>
<keyword id="KW-0489">Methyltransferase</keyword>
<keyword id="KW-1185">Reference proteome</keyword>
<keyword id="KW-0698">rRNA processing</keyword>
<keyword id="KW-0949">S-adenosyl-L-methionine</keyword>
<keyword id="KW-0808">Transferase</keyword>
<feature type="chain" id="PRO_0000198202" description="Ribosomal RNA large subunit methyltransferase H">
    <location>
        <begin position="1"/>
        <end position="137"/>
    </location>
</feature>
<feature type="binding site" evidence="1">
    <location>
        <position position="56"/>
    </location>
    <ligand>
        <name>S-adenosyl-L-methionine</name>
        <dbReference type="ChEBI" id="CHEBI:59789"/>
    </ligand>
</feature>
<feature type="binding site" evidence="1">
    <location>
        <position position="85"/>
    </location>
    <ligand>
        <name>S-adenosyl-L-methionine</name>
        <dbReference type="ChEBI" id="CHEBI:59789"/>
    </ligand>
</feature>
<feature type="binding site" evidence="1">
    <location>
        <begin position="104"/>
        <end position="109"/>
    </location>
    <ligand>
        <name>S-adenosyl-L-methionine</name>
        <dbReference type="ChEBI" id="CHEBI:59789"/>
    </ligand>
</feature>
<evidence type="ECO:0000255" key="1">
    <source>
        <dbReference type="HAMAP-Rule" id="MF_00658"/>
    </source>
</evidence>
<comment type="function">
    <text evidence="1">Specifically methylates the pseudouridine at position 1915 (m3Psi1915) in 23S rRNA.</text>
</comment>
<comment type="catalytic activity">
    <reaction evidence="1">
        <text>pseudouridine(1915) in 23S rRNA + S-adenosyl-L-methionine = N(3)-methylpseudouridine(1915) in 23S rRNA + S-adenosyl-L-homocysteine + H(+)</text>
        <dbReference type="Rhea" id="RHEA:42752"/>
        <dbReference type="Rhea" id="RHEA-COMP:10221"/>
        <dbReference type="Rhea" id="RHEA-COMP:10222"/>
        <dbReference type="ChEBI" id="CHEBI:15378"/>
        <dbReference type="ChEBI" id="CHEBI:57856"/>
        <dbReference type="ChEBI" id="CHEBI:59789"/>
        <dbReference type="ChEBI" id="CHEBI:65314"/>
        <dbReference type="ChEBI" id="CHEBI:74486"/>
        <dbReference type="EC" id="2.1.1.177"/>
    </reaction>
</comment>
<comment type="subunit">
    <text evidence="1">Homodimer.</text>
</comment>
<comment type="subcellular location">
    <subcellularLocation>
        <location evidence="1">Cytoplasm</location>
    </subcellularLocation>
</comment>
<comment type="similarity">
    <text evidence="1">Belongs to the RNA methyltransferase RlmH family.</text>
</comment>
<sequence length="137" mass="15830">MRLRVVAVGRPRLAYARLGVEEYARRMRRYAPLDLVFVRKGEELLPKAEGHRKVVLDERGRLLTTEELYRRLLAWEGERVAFLVGGAEGHPEAVREEADLLLSLSPLTLQHELALLVLMEQLYRVLTLRAGHPYHRP</sequence>
<proteinExistence type="inferred from homology"/>
<protein>
    <recommendedName>
        <fullName evidence="1">Ribosomal RNA large subunit methyltransferase H</fullName>
        <ecNumber evidence="1">2.1.1.177</ecNumber>
    </recommendedName>
    <alternativeName>
        <fullName evidence="1">23S rRNA (pseudouridine1915-N3)-methyltransferase</fullName>
    </alternativeName>
    <alternativeName>
        <fullName evidence="1">23S rRNA m3Psi1915 methyltransferase</fullName>
    </alternativeName>
    <alternativeName>
        <fullName evidence="1">rRNA (pseudouridine-N3-)-methyltransferase RlmH</fullName>
    </alternativeName>
</protein>